<dbReference type="EC" id="4.2.1.1" evidence="8 9 10 11 12 13"/>
<dbReference type="EMBL" id="X66839">
    <property type="protein sequence ID" value="CAA47315.1"/>
    <property type="molecule type" value="mRNA"/>
</dbReference>
<dbReference type="EMBL" id="AJ010588">
    <property type="protein sequence ID" value="CAB82444.1"/>
    <property type="molecule type" value="mRNA"/>
</dbReference>
<dbReference type="EMBL" id="AL133410">
    <property type="status" value="NOT_ANNOTATED_CDS"/>
    <property type="molecule type" value="Genomic_DNA"/>
</dbReference>
<dbReference type="EMBL" id="AL357874">
    <property type="status" value="NOT_ANNOTATED_CDS"/>
    <property type="molecule type" value="Genomic_DNA"/>
</dbReference>
<dbReference type="EMBL" id="CH471071">
    <property type="protein sequence ID" value="EAW58359.1"/>
    <property type="molecule type" value="Genomic_DNA"/>
</dbReference>
<dbReference type="EMBL" id="BC014950">
    <property type="protein sequence ID" value="AAH14950.1"/>
    <property type="molecule type" value="mRNA"/>
</dbReference>
<dbReference type="CCDS" id="CCDS6585.1"/>
<dbReference type="PIR" id="I38013">
    <property type="entry name" value="I38013"/>
</dbReference>
<dbReference type="RefSeq" id="NP_001207.2">
    <property type="nucleotide sequence ID" value="NM_001216.3"/>
</dbReference>
<dbReference type="PDB" id="2HKF">
    <property type="method" value="X-ray"/>
    <property type="resolution" value="2.01 A"/>
    <property type="chains" value="P=83-91"/>
</dbReference>
<dbReference type="PDB" id="3IAI">
    <property type="method" value="X-ray"/>
    <property type="resolution" value="2.20 A"/>
    <property type="chains" value="A/B/C/D=137-391"/>
</dbReference>
<dbReference type="PDB" id="5DVX">
    <property type="method" value="X-ray"/>
    <property type="resolution" value="1.60 A"/>
    <property type="chains" value="A/B=140-399"/>
</dbReference>
<dbReference type="PDB" id="5FL4">
    <property type="method" value="X-ray"/>
    <property type="resolution" value="1.82 A"/>
    <property type="chains" value="A/B/C/D=137-391"/>
</dbReference>
<dbReference type="PDB" id="5FL5">
    <property type="method" value="X-ray"/>
    <property type="resolution" value="2.05 A"/>
    <property type="chains" value="A/B/C/D=137-391"/>
</dbReference>
<dbReference type="PDB" id="5FL6">
    <property type="method" value="X-ray"/>
    <property type="resolution" value="1.95 A"/>
    <property type="chains" value="A/B/C/D=137-391"/>
</dbReference>
<dbReference type="PDB" id="6FE0">
    <property type="method" value="X-ray"/>
    <property type="resolution" value="1.91 A"/>
    <property type="chains" value="A/B/C/D=137-391"/>
</dbReference>
<dbReference type="PDB" id="6FE1">
    <property type="method" value="X-ray"/>
    <property type="resolution" value="1.95 A"/>
    <property type="chains" value="A/B/C/D=137-391"/>
</dbReference>
<dbReference type="PDB" id="6FE2">
    <property type="method" value="X-ray"/>
    <property type="resolution" value="1.87 A"/>
    <property type="chains" value="A/B/C/D=137-391"/>
</dbReference>
<dbReference type="PDB" id="6G98">
    <property type="method" value="X-ray"/>
    <property type="resolution" value="2.47 A"/>
    <property type="chains" value="A/B/C/D=135-391"/>
</dbReference>
<dbReference type="PDB" id="6G9U">
    <property type="method" value="X-ray"/>
    <property type="resolution" value="1.75 A"/>
    <property type="chains" value="A/B/C/D=137-391"/>
</dbReference>
<dbReference type="PDB" id="6QN2">
    <property type="method" value="X-ray"/>
    <property type="resolution" value="1.95 A"/>
    <property type="chains" value="A/B/C/D=137-391"/>
</dbReference>
<dbReference type="PDB" id="6QN5">
    <property type="method" value="X-ray"/>
    <property type="resolution" value="1.96 A"/>
    <property type="chains" value="A/B/C/D=137-391"/>
</dbReference>
<dbReference type="PDB" id="6QN6">
    <property type="method" value="X-ray"/>
    <property type="resolution" value="2.25 A"/>
    <property type="chains" value="A/B/C/D=137-391"/>
</dbReference>
<dbReference type="PDB" id="6QUT">
    <property type="method" value="X-ray"/>
    <property type="resolution" value="1.96 A"/>
    <property type="chains" value="A/B/C/D=141-391"/>
</dbReference>
<dbReference type="PDB" id="6RQN">
    <property type="method" value="X-ray"/>
    <property type="resolution" value="1.78 A"/>
    <property type="chains" value="A=140-395"/>
</dbReference>
<dbReference type="PDB" id="6RQQ">
    <property type="method" value="X-ray"/>
    <property type="resolution" value="1.28 A"/>
    <property type="chains" value="A/C=140-395"/>
</dbReference>
<dbReference type="PDB" id="6RQU">
    <property type="method" value="X-ray"/>
    <property type="resolution" value="1.39 A"/>
    <property type="chains" value="A=140-395"/>
</dbReference>
<dbReference type="PDB" id="6RQW">
    <property type="method" value="X-ray"/>
    <property type="resolution" value="1.49 A"/>
    <property type="chains" value="A=140-395"/>
</dbReference>
<dbReference type="PDB" id="6TL5">
    <property type="method" value="X-ray"/>
    <property type="resolution" value="2.21 A"/>
    <property type="chains" value="A/B/C/D=135-391"/>
</dbReference>
<dbReference type="PDB" id="6TL6">
    <property type="method" value="X-ray"/>
    <property type="resolution" value="2.15 A"/>
    <property type="chains" value="A/B/C/D=135-391"/>
</dbReference>
<dbReference type="PDB" id="6Y74">
    <property type="method" value="X-ray"/>
    <property type="resolution" value="1.53 A"/>
    <property type="chains" value="A/B=137-394"/>
</dbReference>
<dbReference type="PDB" id="7POM">
    <property type="method" value="X-ray"/>
    <property type="resolution" value="1.98 A"/>
    <property type="chains" value="A/B/C/D=137-391"/>
</dbReference>
<dbReference type="PDB" id="8CO0">
    <property type="method" value="X-ray"/>
    <property type="resolution" value="2.30 A"/>
    <property type="chains" value="A/C/E/G=137-391"/>
</dbReference>
<dbReference type="PDB" id="8Q18">
    <property type="method" value="X-ray"/>
    <property type="resolution" value="2.13 A"/>
    <property type="chains" value="A/B/C/D=137-391"/>
</dbReference>
<dbReference type="PDB" id="8Q19">
    <property type="method" value="X-ray"/>
    <property type="resolution" value="2.63 A"/>
    <property type="chains" value="A/B/C/D=137-391"/>
</dbReference>
<dbReference type="PDB" id="8Q1A">
    <property type="method" value="X-ray"/>
    <property type="resolution" value="2.35 A"/>
    <property type="chains" value="A/B/C/D=137-391"/>
</dbReference>
<dbReference type="PDBsum" id="2HKF"/>
<dbReference type="PDBsum" id="3IAI"/>
<dbReference type="PDBsum" id="5DVX"/>
<dbReference type="PDBsum" id="5FL4"/>
<dbReference type="PDBsum" id="5FL5"/>
<dbReference type="PDBsum" id="5FL6"/>
<dbReference type="PDBsum" id="6FE0"/>
<dbReference type="PDBsum" id="6FE1"/>
<dbReference type="PDBsum" id="6FE2"/>
<dbReference type="PDBsum" id="6G98"/>
<dbReference type="PDBsum" id="6G9U"/>
<dbReference type="PDBsum" id="6QN2"/>
<dbReference type="PDBsum" id="6QN5"/>
<dbReference type="PDBsum" id="6QN6"/>
<dbReference type="PDBsum" id="6QUT"/>
<dbReference type="PDBsum" id="6RQN"/>
<dbReference type="PDBsum" id="6RQQ"/>
<dbReference type="PDBsum" id="6RQU"/>
<dbReference type="PDBsum" id="6RQW"/>
<dbReference type="PDBsum" id="6TL5"/>
<dbReference type="PDBsum" id="6TL6"/>
<dbReference type="PDBsum" id="6Y74"/>
<dbReference type="PDBsum" id="7POM"/>
<dbReference type="PDBsum" id="8CO0"/>
<dbReference type="PDBsum" id="8Q18"/>
<dbReference type="PDBsum" id="8Q19"/>
<dbReference type="PDBsum" id="8Q1A"/>
<dbReference type="SASBDB" id="Q16790"/>
<dbReference type="SMR" id="Q16790"/>
<dbReference type="BioGRID" id="107223">
    <property type="interactions" value="216"/>
</dbReference>
<dbReference type="CORUM" id="Q16790"/>
<dbReference type="DIP" id="DIP-48973N"/>
<dbReference type="FunCoup" id="Q16790">
    <property type="interactions" value="224"/>
</dbReference>
<dbReference type="IntAct" id="Q16790">
    <property type="interactions" value="6"/>
</dbReference>
<dbReference type="MINT" id="Q16790"/>
<dbReference type="STRING" id="9606.ENSP00000367608"/>
<dbReference type="BindingDB" id="Q16790"/>
<dbReference type="ChEMBL" id="CHEMBL3594"/>
<dbReference type="DrugBank" id="DB08782">
    <property type="generic name" value="4-(2-AMINOETHYL)BENZENESULFONAMIDE"/>
</dbReference>
<dbReference type="DrugBank" id="DB07050">
    <property type="generic name" value="5-[(phenylsulfonyl)amino]-1,3,4-thiadiazole-2-sulfonamide"/>
</dbReference>
<dbReference type="DrugBank" id="DB12348">
    <property type="generic name" value="5-amino-1,3,4-thiadiazole-2-thiol"/>
</dbReference>
<dbReference type="DrugBank" id="DB00562">
    <property type="generic name" value="Benzthiazide"/>
</dbReference>
<dbReference type="DrugBank" id="DB03854">
    <property type="generic name" value="Cadaverine"/>
</dbReference>
<dbReference type="DrugBank" id="DB07556">
    <property type="generic name" value="CGS-27023"/>
</dbReference>
<dbReference type="DrugBank" id="DB14086">
    <property type="generic name" value="Cianidanol"/>
</dbReference>
<dbReference type="DrugBank" id="DB04665">
    <property type="generic name" value="Coumarin"/>
</dbReference>
<dbReference type="DrugBank" id="DB11672">
    <property type="generic name" value="Curcumin"/>
</dbReference>
<dbReference type="DrugBank" id="DB00606">
    <property type="generic name" value="Cyclothiazide"/>
</dbReference>
<dbReference type="DrugBank" id="DB12741">
    <property type="generic name" value="DTP-348"/>
</dbReference>
<dbReference type="DrugBank" id="DB08846">
    <property type="generic name" value="Ellagic acid"/>
</dbReference>
<dbReference type="DrugBank" id="DB07767">
    <property type="generic name" value="Ferulic acid"/>
</dbReference>
<dbReference type="DrugBank" id="DB05304">
    <property type="generic name" value="Girentuximab"/>
</dbReference>
<dbReference type="DrugBank" id="DB03260">
    <property type="generic name" value="Hexamethylene diamine"/>
</dbReference>
<dbReference type="DrugBank" id="DB00774">
    <property type="generic name" value="Hydroflumethiazide"/>
</dbReference>
<dbReference type="DrugBank" id="DB06370">
    <property type="generic name" value="Indisulam"/>
</dbReference>
<dbReference type="DrugBank" id="DB07476">
    <property type="generic name" value="N-[4-(AMINOSULFONYL)PHENYL]-2-MERCAPTOBENZAMIDE"/>
</dbReference>
<dbReference type="DrugBank" id="DB04066">
    <property type="generic name" value="p-Coumaric acid"/>
</dbReference>
<dbReference type="DrugBank" id="DB17299">
    <property type="generic name" value="p-Toluenesulfonamide"/>
</dbReference>
<dbReference type="DrugBank" id="DB03255">
    <property type="generic name" value="Phenol"/>
</dbReference>
<dbReference type="DrugBank" id="DB12418">
    <property type="generic name" value="Saccharin"/>
</dbReference>
<dbReference type="DrugBank" id="DB09460">
    <property type="generic name" value="Sodium carbonate"/>
</dbReference>
<dbReference type="DrugBank" id="DB00127">
    <property type="generic name" value="Spermine"/>
</dbReference>
<dbReference type="DrugBank" id="DB00909">
    <property type="generic name" value="Zonisamide"/>
</dbReference>
<dbReference type="DrugCentral" id="Q16790"/>
<dbReference type="GuidetoPHARMACOLOGY" id="3055"/>
<dbReference type="TCDB" id="8.A.164.1.1">
    <property type="family name" value="the integral membrane carbonic anhydrase xi (ca9) family"/>
</dbReference>
<dbReference type="GlyCosmos" id="Q16790">
    <property type="glycosylation" value="2 sites, 2 glycans"/>
</dbReference>
<dbReference type="GlyGen" id="Q16790">
    <property type="glycosylation" value="3 sites, 4 O-linked glycans (2 sites)"/>
</dbReference>
<dbReference type="iPTMnet" id="Q16790"/>
<dbReference type="PhosphoSitePlus" id="Q16790"/>
<dbReference type="BioMuta" id="CA9"/>
<dbReference type="DMDM" id="83300925"/>
<dbReference type="jPOST" id="Q16790"/>
<dbReference type="MassIVE" id="Q16790"/>
<dbReference type="PaxDb" id="9606-ENSP00000367608"/>
<dbReference type="PeptideAtlas" id="Q16790"/>
<dbReference type="ProteomicsDB" id="61071"/>
<dbReference type="Pumba" id="Q16790"/>
<dbReference type="ABCD" id="Q16790">
    <property type="antibodies" value="17 sequenced antibodies"/>
</dbReference>
<dbReference type="Antibodypedia" id="3915">
    <property type="antibodies" value="1407 antibodies from 48 providers"/>
</dbReference>
<dbReference type="DNASU" id="768"/>
<dbReference type="Ensembl" id="ENST00000378357.9">
    <property type="protein sequence ID" value="ENSP00000367608.4"/>
    <property type="gene ID" value="ENSG00000107159.14"/>
</dbReference>
<dbReference type="GeneID" id="768"/>
<dbReference type="KEGG" id="hsa:768"/>
<dbReference type="MANE-Select" id="ENST00000378357.9">
    <property type="protein sequence ID" value="ENSP00000367608.4"/>
    <property type="RefSeq nucleotide sequence ID" value="NM_001216.3"/>
    <property type="RefSeq protein sequence ID" value="NP_001207.2"/>
</dbReference>
<dbReference type="UCSC" id="uc003zxo.5">
    <property type="organism name" value="human"/>
</dbReference>
<dbReference type="AGR" id="HGNC:1383"/>
<dbReference type="CTD" id="768"/>
<dbReference type="DisGeNET" id="768"/>
<dbReference type="GeneCards" id="CA9"/>
<dbReference type="HGNC" id="HGNC:1383">
    <property type="gene designation" value="CA9"/>
</dbReference>
<dbReference type="HPA" id="ENSG00000107159">
    <property type="expression patterns" value="Tissue enriched (stomach)"/>
</dbReference>
<dbReference type="MIM" id="603179">
    <property type="type" value="gene"/>
</dbReference>
<dbReference type="neXtProt" id="NX_Q16790"/>
<dbReference type="OpenTargets" id="ENSG00000107159"/>
<dbReference type="PharmGKB" id="PA25998"/>
<dbReference type="VEuPathDB" id="HostDB:ENSG00000107159"/>
<dbReference type="eggNOG" id="KOG0382">
    <property type="taxonomic scope" value="Eukaryota"/>
</dbReference>
<dbReference type="GeneTree" id="ENSGT00940000161646"/>
<dbReference type="HOGENOM" id="CLU_039326_1_1_1"/>
<dbReference type="InParanoid" id="Q16790"/>
<dbReference type="OMA" id="MNFRATQ"/>
<dbReference type="OrthoDB" id="429145at2759"/>
<dbReference type="PAN-GO" id="Q16790">
    <property type="GO annotations" value="3 GO annotations based on evolutionary models"/>
</dbReference>
<dbReference type="PhylomeDB" id="Q16790"/>
<dbReference type="TreeFam" id="TF316425"/>
<dbReference type="BRENDA" id="4.2.1.1">
    <property type="organism ID" value="2681"/>
</dbReference>
<dbReference type="PathwayCommons" id="Q16790"/>
<dbReference type="Reactome" id="R-HSA-1234158">
    <property type="pathway name" value="Regulation of gene expression by Hypoxia-inducible Factor"/>
</dbReference>
<dbReference type="Reactome" id="R-HSA-1475029">
    <property type="pathway name" value="Reversible hydration of carbon dioxide"/>
</dbReference>
<dbReference type="SignaLink" id="Q16790"/>
<dbReference type="SIGNOR" id="Q16790"/>
<dbReference type="BioGRID-ORCS" id="768">
    <property type="hits" value="27 hits in 1164 CRISPR screens"/>
</dbReference>
<dbReference type="CD-CODE" id="91857CE7">
    <property type="entry name" value="Nucleolus"/>
</dbReference>
<dbReference type="ChiTaRS" id="CA9">
    <property type="organism name" value="human"/>
</dbReference>
<dbReference type="EvolutionaryTrace" id="Q16790"/>
<dbReference type="GeneWiki" id="Carbonic_anhydrase_9"/>
<dbReference type="GenomeRNAi" id="768"/>
<dbReference type="Pharos" id="Q16790">
    <property type="development level" value="Tclin"/>
</dbReference>
<dbReference type="PRO" id="PR:Q16790"/>
<dbReference type="Proteomes" id="UP000005640">
    <property type="component" value="Chromosome 9"/>
</dbReference>
<dbReference type="RNAct" id="Q16790">
    <property type="molecule type" value="protein"/>
</dbReference>
<dbReference type="Bgee" id="ENSG00000107159">
    <property type="expression patterns" value="Expressed in body of stomach and 128 other cell types or tissues"/>
</dbReference>
<dbReference type="ExpressionAtlas" id="Q16790">
    <property type="expression patterns" value="baseline and differential"/>
</dbReference>
<dbReference type="GO" id="GO:0016323">
    <property type="term" value="C:basolateral plasma membrane"/>
    <property type="evidence" value="ECO:0007669"/>
    <property type="project" value="Ensembl"/>
</dbReference>
<dbReference type="GO" id="GO:0016020">
    <property type="term" value="C:membrane"/>
    <property type="evidence" value="ECO:0000304"/>
    <property type="project" value="ProtInc"/>
</dbReference>
<dbReference type="GO" id="GO:0031528">
    <property type="term" value="C:microvillus membrane"/>
    <property type="evidence" value="ECO:0007669"/>
    <property type="project" value="UniProtKB-SubCell"/>
</dbReference>
<dbReference type="GO" id="GO:0005730">
    <property type="term" value="C:nucleolus"/>
    <property type="evidence" value="ECO:0007669"/>
    <property type="project" value="UniProtKB-SubCell"/>
</dbReference>
<dbReference type="GO" id="GO:0005886">
    <property type="term" value="C:plasma membrane"/>
    <property type="evidence" value="ECO:0000314"/>
    <property type="project" value="UniProtKB"/>
</dbReference>
<dbReference type="GO" id="GO:0004089">
    <property type="term" value="F:carbonate dehydratase activity"/>
    <property type="evidence" value="ECO:0000314"/>
    <property type="project" value="UniProtKB"/>
</dbReference>
<dbReference type="GO" id="GO:0140677">
    <property type="term" value="F:molecular function activator activity"/>
    <property type="evidence" value="ECO:0000314"/>
    <property type="project" value="DisProt"/>
</dbReference>
<dbReference type="GO" id="GO:0008270">
    <property type="term" value="F:zinc ion binding"/>
    <property type="evidence" value="ECO:0000314"/>
    <property type="project" value="UniProtKB"/>
</dbReference>
<dbReference type="GO" id="GO:0002009">
    <property type="term" value="P:morphogenesis of an epithelium"/>
    <property type="evidence" value="ECO:0007669"/>
    <property type="project" value="Ensembl"/>
</dbReference>
<dbReference type="GO" id="GO:0001666">
    <property type="term" value="P:response to hypoxia"/>
    <property type="evidence" value="ECO:0007669"/>
    <property type="project" value="Ensembl"/>
</dbReference>
<dbReference type="GO" id="GO:0033574">
    <property type="term" value="P:response to testosterone"/>
    <property type="evidence" value="ECO:0007669"/>
    <property type="project" value="Ensembl"/>
</dbReference>
<dbReference type="GO" id="GO:0009410">
    <property type="term" value="P:response to xenobiotic stimulus"/>
    <property type="evidence" value="ECO:0007669"/>
    <property type="project" value="Ensembl"/>
</dbReference>
<dbReference type="GO" id="GO:0046903">
    <property type="term" value="P:secretion"/>
    <property type="evidence" value="ECO:0007669"/>
    <property type="project" value="Ensembl"/>
</dbReference>
<dbReference type="CDD" id="cd03150">
    <property type="entry name" value="alpha_CA_IX"/>
    <property type="match status" value="1"/>
</dbReference>
<dbReference type="DisProt" id="DP02538"/>
<dbReference type="FunFam" id="3.10.200.10:FF:000003">
    <property type="entry name" value="Carbonic anhydrase 12"/>
    <property type="match status" value="1"/>
</dbReference>
<dbReference type="Gene3D" id="3.10.200.10">
    <property type="entry name" value="Alpha carbonic anhydrase"/>
    <property type="match status" value="1"/>
</dbReference>
<dbReference type="InterPro" id="IPR001148">
    <property type="entry name" value="CA_dom"/>
</dbReference>
<dbReference type="InterPro" id="IPR036398">
    <property type="entry name" value="CA_dom_sf"/>
</dbReference>
<dbReference type="InterPro" id="IPR023561">
    <property type="entry name" value="Carbonic_anhydrase_a-class"/>
</dbReference>
<dbReference type="InterPro" id="IPR018338">
    <property type="entry name" value="Carbonic_anhydrase_a-class_CS"/>
</dbReference>
<dbReference type="PANTHER" id="PTHR18952">
    <property type="entry name" value="CARBONIC ANHYDRASE"/>
    <property type="match status" value="1"/>
</dbReference>
<dbReference type="PANTHER" id="PTHR18952:SF18">
    <property type="entry name" value="CARBONIC ANHYDRASE 9"/>
    <property type="match status" value="1"/>
</dbReference>
<dbReference type="Pfam" id="PF00194">
    <property type="entry name" value="Carb_anhydrase"/>
    <property type="match status" value="1"/>
</dbReference>
<dbReference type="SMART" id="SM01057">
    <property type="entry name" value="Carb_anhydrase"/>
    <property type="match status" value="1"/>
</dbReference>
<dbReference type="SUPFAM" id="SSF51069">
    <property type="entry name" value="Carbonic anhydrase"/>
    <property type="match status" value="1"/>
</dbReference>
<dbReference type="PROSITE" id="PS00162">
    <property type="entry name" value="ALPHA_CA_1"/>
    <property type="match status" value="1"/>
</dbReference>
<dbReference type="PROSITE" id="PS51144">
    <property type="entry name" value="ALPHA_CA_2"/>
    <property type="match status" value="1"/>
</dbReference>
<keyword id="KW-0002">3D-structure</keyword>
<keyword id="KW-1003">Cell membrane</keyword>
<keyword id="KW-0966">Cell projection</keyword>
<keyword id="KW-0903">Direct protein sequencing</keyword>
<keyword id="KW-1015">Disulfide bond</keyword>
<keyword id="KW-0325">Glycoprotein</keyword>
<keyword id="KW-0456">Lyase</keyword>
<keyword id="KW-0472">Membrane</keyword>
<keyword id="KW-0479">Metal-binding</keyword>
<keyword id="KW-0539">Nucleus</keyword>
<keyword id="KW-0597">Phosphoprotein</keyword>
<keyword id="KW-1267">Proteomics identification</keyword>
<keyword id="KW-1185">Reference proteome</keyword>
<keyword id="KW-0732">Signal</keyword>
<keyword id="KW-0812">Transmembrane</keyword>
<keyword id="KW-1133">Transmembrane helix</keyword>
<keyword id="KW-0862">Zinc</keyword>
<gene>
    <name type="primary">CA9</name>
    <name type="synonym">G250</name>
    <name type="synonym">MN</name>
</gene>
<accession>Q16790</accession>
<accession>Q5T4R1</accession>
<proteinExistence type="evidence at protein level"/>
<feature type="signal peptide" evidence="5">
    <location>
        <begin position="1"/>
        <end position="37"/>
    </location>
</feature>
<feature type="chain" id="PRO_0000004243" description="Carbonic anhydrase 9">
    <location>
        <begin position="38"/>
        <end position="459"/>
    </location>
</feature>
<feature type="topological domain" description="Extracellular">
    <location>
        <begin position="38"/>
        <end position="414"/>
    </location>
</feature>
<feature type="transmembrane region" description="Helical" evidence="2">
    <location>
        <begin position="415"/>
        <end position="435"/>
    </location>
</feature>
<feature type="topological domain" description="Cytoplasmic">
    <location>
        <begin position="436"/>
        <end position="459"/>
    </location>
</feature>
<feature type="domain" description="Alpha-carbonic anhydrase" evidence="3">
    <location>
        <begin position="139"/>
        <end position="390"/>
    </location>
</feature>
<feature type="region of interest" description="Proteoglycan-like (PG)">
    <location>
        <begin position="38"/>
        <end position="112"/>
    </location>
</feature>
<feature type="region of interest" description="Disordered" evidence="4">
    <location>
        <begin position="42"/>
        <end position="154"/>
    </location>
</feature>
<feature type="region of interest" description="Catalytic" evidence="13">
    <location>
        <begin position="138"/>
        <end position="391"/>
    </location>
</feature>
<feature type="compositionally biased region" description="Acidic residues" evidence="4">
    <location>
        <begin position="55"/>
        <end position="95"/>
    </location>
</feature>
<feature type="compositionally biased region" description="Basic and acidic residues" evidence="4">
    <location>
        <begin position="96"/>
        <end position="112"/>
    </location>
</feature>
<feature type="compositionally biased region" description="Basic and acidic residues" evidence="4">
    <location>
        <begin position="129"/>
        <end position="140"/>
    </location>
</feature>
<feature type="active site" description="Proton donor/acceptor" evidence="1">
    <location>
        <position position="200"/>
    </location>
</feature>
<feature type="binding site" evidence="13">
    <location>
        <position position="226"/>
    </location>
    <ligand>
        <name>Zn(2+)</name>
        <dbReference type="ChEBI" id="CHEBI:29105"/>
        <note>catalytic</note>
    </ligand>
</feature>
<feature type="binding site" evidence="13">
    <location>
        <position position="228"/>
    </location>
    <ligand>
        <name>Zn(2+)</name>
        <dbReference type="ChEBI" id="CHEBI:29105"/>
        <note>catalytic</note>
    </ligand>
</feature>
<feature type="binding site" evidence="13">
    <location>
        <position position="251"/>
    </location>
    <ligand>
        <name>Zn(2+)</name>
        <dbReference type="ChEBI" id="CHEBI:29105"/>
        <note>catalytic</note>
    </ligand>
</feature>
<feature type="binding site" evidence="1">
    <location>
        <begin position="332"/>
        <end position="333"/>
    </location>
    <ligand>
        <name>substrate</name>
    </ligand>
</feature>
<feature type="modified residue" description="Phosphotyrosine" evidence="7">
    <location>
        <position position="449"/>
    </location>
</feature>
<feature type="glycosylation site" description="O-linked (GlcNAc...) threonine" evidence="10">
    <location>
        <position position="115"/>
    </location>
</feature>
<feature type="glycosylation site" description="N-linked (GlcNAc...) asparagine" evidence="10 13">
    <location>
        <position position="346"/>
    </location>
</feature>
<feature type="disulfide bond" evidence="13">
    <location>
        <begin position="156"/>
        <end position="336"/>
    </location>
</feature>
<feature type="disulfide bond" description="Interchain" evidence="18">
    <location>
        <position position="174"/>
    </location>
</feature>
<feature type="sequence variant" id="VAR_010787" description="In dbSNP:rs2071676." evidence="6 14">
    <original>V</original>
    <variation>M</variation>
    <location>
        <position position="33"/>
    </location>
</feature>
<feature type="sequence variant" id="VAR_020049" description="In dbSNP:rs3829078.">
    <original>Q</original>
    <variation>R</variation>
    <location>
        <position position="326"/>
    </location>
</feature>
<feature type="turn" evidence="19">
    <location>
        <begin position="137"/>
        <end position="139"/>
    </location>
</feature>
<feature type="strand" evidence="22">
    <location>
        <begin position="143"/>
        <end position="147"/>
    </location>
</feature>
<feature type="turn" evidence="22">
    <location>
        <begin position="150"/>
        <end position="152"/>
    </location>
</feature>
<feature type="helix" evidence="22">
    <location>
        <begin position="154"/>
        <end position="157"/>
    </location>
</feature>
<feature type="strand" evidence="21">
    <location>
        <begin position="164"/>
        <end position="166"/>
    </location>
</feature>
<feature type="helix" evidence="22">
    <location>
        <begin position="168"/>
        <end position="170"/>
    </location>
</feature>
<feature type="strand" evidence="22">
    <location>
        <begin position="171"/>
        <end position="173"/>
    </location>
</feature>
<feature type="strand" evidence="22">
    <location>
        <begin position="181"/>
        <end position="184"/>
    </location>
</feature>
<feature type="strand" evidence="22">
    <location>
        <begin position="193"/>
        <end position="197"/>
    </location>
</feature>
<feature type="strand" evidence="22">
    <location>
        <begin position="202"/>
        <end position="205"/>
    </location>
</feature>
<feature type="strand" evidence="22">
    <location>
        <begin position="211"/>
        <end position="215"/>
    </location>
</feature>
<feature type="strand" evidence="22">
    <location>
        <begin position="218"/>
        <end position="229"/>
    </location>
</feature>
<feature type="strand" evidence="22">
    <location>
        <begin position="238"/>
        <end position="241"/>
    </location>
</feature>
<feature type="strand" evidence="22">
    <location>
        <begin position="247"/>
        <end position="256"/>
    </location>
</feature>
<feature type="helix" evidence="22">
    <location>
        <begin position="262"/>
        <end position="265"/>
    </location>
</feature>
<feature type="strand" evidence="22">
    <location>
        <begin position="271"/>
        <end position="281"/>
    </location>
</feature>
<feature type="helix" evidence="22">
    <location>
        <begin position="287"/>
        <end position="293"/>
    </location>
</feature>
<feature type="turn" evidence="20">
    <location>
        <begin position="294"/>
        <end position="296"/>
    </location>
</feature>
<feature type="helix" evidence="22">
    <location>
        <begin position="297"/>
        <end position="299"/>
    </location>
</feature>
<feature type="strand" evidence="22">
    <location>
        <begin position="305"/>
        <end position="308"/>
    </location>
</feature>
<feature type="helix" evidence="22">
    <location>
        <begin position="313"/>
        <end position="316"/>
    </location>
</feature>
<feature type="strand" evidence="22">
    <location>
        <begin position="324"/>
        <end position="330"/>
    </location>
</feature>
<feature type="strand" evidence="22">
    <location>
        <begin position="338"/>
        <end position="347"/>
    </location>
</feature>
<feature type="strand" evidence="22">
    <location>
        <begin position="349"/>
        <end position="351"/>
    </location>
</feature>
<feature type="helix" evidence="22">
    <location>
        <begin position="353"/>
        <end position="361"/>
    </location>
</feature>
<feature type="helix" evidence="23">
    <location>
        <begin position="366"/>
        <end position="368"/>
    </location>
</feature>
<feature type="strand" evidence="22">
    <location>
        <begin position="387"/>
        <end position="390"/>
    </location>
</feature>
<evidence type="ECO:0000250" key="1">
    <source>
        <dbReference type="UniProtKB" id="P00918"/>
    </source>
</evidence>
<evidence type="ECO:0000255" key="2"/>
<evidence type="ECO:0000255" key="3">
    <source>
        <dbReference type="PROSITE-ProRule" id="PRU01134"/>
    </source>
</evidence>
<evidence type="ECO:0000256" key="4">
    <source>
        <dbReference type="SAM" id="MobiDB-lite"/>
    </source>
</evidence>
<evidence type="ECO:0000269" key="5">
    <source>
    </source>
</evidence>
<evidence type="ECO:0000269" key="6">
    <source>
    </source>
</evidence>
<evidence type="ECO:0000269" key="7">
    <source>
    </source>
</evidence>
<evidence type="ECO:0000269" key="8">
    <source>
    </source>
</evidence>
<evidence type="ECO:0000269" key="9">
    <source>
    </source>
</evidence>
<evidence type="ECO:0000269" key="10">
    <source>
    </source>
</evidence>
<evidence type="ECO:0000269" key="11">
    <source>
    </source>
</evidence>
<evidence type="ECO:0000269" key="12">
    <source>
    </source>
</evidence>
<evidence type="ECO:0000269" key="13">
    <source>
    </source>
</evidence>
<evidence type="ECO:0000269" key="14">
    <source>
    </source>
</evidence>
<evidence type="ECO:0000269" key="15">
    <source>
    </source>
</evidence>
<evidence type="ECO:0000305" key="16"/>
<evidence type="ECO:0000305" key="17">
    <source>
    </source>
</evidence>
<evidence type="ECO:0000305" key="18">
    <source>
    </source>
</evidence>
<evidence type="ECO:0007829" key="19">
    <source>
        <dbReference type="PDB" id="3IAI"/>
    </source>
</evidence>
<evidence type="ECO:0007829" key="20">
    <source>
        <dbReference type="PDB" id="5FL4"/>
    </source>
</evidence>
<evidence type="ECO:0007829" key="21">
    <source>
        <dbReference type="PDB" id="6G98"/>
    </source>
</evidence>
<evidence type="ECO:0007829" key="22">
    <source>
        <dbReference type="PDB" id="6RQQ"/>
    </source>
</evidence>
<evidence type="ECO:0007829" key="23">
    <source>
        <dbReference type="PDB" id="6Y74"/>
    </source>
</evidence>
<sequence length="459" mass="49698">MAPLCPSPWLPLLIPAPAPGLTVQLLLSLLLLVPVHPQRLPRMQEDSPLGGGSSGEDDPLGEEDLPSEEDSPREEDPPGEEDLPGEEDLPGEEDLPEVKPKSEEEGSLKLEDLPTVEAPGDPQEPQNNAHRDKEGDDQSHWRYGGDPPWPRVSPACAGRFQSPVDIRPQLAAFCPALRPLELLGFQLPPLPELRLRNNGHSVQLTLPPGLEMALGPGREYRALQLHLHWGAAGRPGSEHTVEGHRFPAEIHVVHLSTAFARVDEALGRPGGLAVLAAFLEEGPEENSAYEQLLSRLEEIAEEGSETQVPGLDISALLPSDFSRYFQYEGSLTTPPCAQGVIWTVFNQTVMLSAKQLHTLSDTLWGPGDSRLQLNFRATQPLNGRVIEASFPAGVDSSPRAAEPVQLNSCLAAGDILALVFGLLFAVTSVAFLVQMRRQHRRGTKGGVSYRPAEVAETGA</sequence>
<protein>
    <recommendedName>
        <fullName>Carbonic anhydrase 9</fullName>
        <ecNumber evidence="8 9 10 11 12 13">4.2.1.1</ecNumber>
    </recommendedName>
    <alternativeName>
        <fullName>Carbonate dehydratase IX</fullName>
    </alternativeName>
    <alternativeName>
        <fullName>Carbonic anhydrase IX</fullName>
        <shortName>CA-IX</shortName>
        <shortName>CAIX</shortName>
    </alternativeName>
    <alternativeName>
        <fullName>Membrane antigen MN</fullName>
    </alternativeName>
    <alternativeName>
        <fullName>P54/58N</fullName>
    </alternativeName>
    <alternativeName>
        <fullName>Renal cell carcinoma-associated antigen G250</fullName>
        <shortName>RCC-associated antigen G250</shortName>
    </alternativeName>
    <alternativeName>
        <fullName>pMW1</fullName>
    </alternativeName>
</protein>
<organism>
    <name type="scientific">Homo sapiens</name>
    <name type="common">Human</name>
    <dbReference type="NCBI Taxonomy" id="9606"/>
    <lineage>
        <taxon>Eukaryota</taxon>
        <taxon>Metazoa</taxon>
        <taxon>Chordata</taxon>
        <taxon>Craniata</taxon>
        <taxon>Vertebrata</taxon>
        <taxon>Euteleostomi</taxon>
        <taxon>Mammalia</taxon>
        <taxon>Eutheria</taxon>
        <taxon>Euarchontoglires</taxon>
        <taxon>Primates</taxon>
        <taxon>Haplorrhini</taxon>
        <taxon>Catarrhini</taxon>
        <taxon>Hominidae</taxon>
        <taxon>Homo</taxon>
    </lineage>
</organism>
<reference key="1">
    <citation type="journal article" date="1994" name="Oncogene">
        <title>Cloning and characterization of MN, a human tumor-associated protein with a domain homologous to carbonic anhydrase and a putative helix-loop-helix DNA binding segment.</title>
        <authorList>
            <person name="Pastorek J."/>
            <person name="Pastorekova S."/>
            <person name="Callebaut I."/>
            <person name="Mornon J.-P."/>
            <person name="Zelnik V."/>
            <person name="Opavsky R."/>
            <person name="Zat'Ovicova M."/>
            <person name="Liao S."/>
            <person name="Portetelle D."/>
            <person name="Stanbridge E.J."/>
            <person name="Zavada J."/>
            <person name="Burny A."/>
            <person name="Kettmann R."/>
        </authorList>
    </citation>
    <scope>NUCLEOTIDE SEQUENCE [MRNA]</scope>
    <scope>CHARACTERIZATION</scope>
    <scope>VARIANT MET-33</scope>
    <source>
        <tissue>Carcinoma</tissue>
    </source>
</reference>
<reference key="2">
    <citation type="journal article" date="2000" name="Int. J. Cancer">
        <title>Molecular cloning and immunogenicity of renal cell carcinoma-associated antigen G250.</title>
        <authorList>
            <person name="Grabmaier K."/>
            <person name="Vissers J.L.M."/>
            <person name="De Weijert M.C.A."/>
            <person name="Oosterwijk-Wakka J.C."/>
            <person name="Van Bokhoven A."/>
            <person name="Brakenhoff R.H."/>
            <person name="Noessner E."/>
            <person name="Mulders P.A."/>
            <person name="Merkx G."/>
            <person name="Figdor C.G."/>
            <person name="Adema G.J."/>
            <person name="Oosterwijk E."/>
        </authorList>
    </citation>
    <scope>NUCLEOTIDE SEQUENCE [MRNA]</scope>
    <source>
        <tissue>Renal cell carcinoma</tissue>
    </source>
</reference>
<reference key="3">
    <citation type="journal article" date="2004" name="Nature">
        <title>DNA sequence and analysis of human chromosome 9.</title>
        <authorList>
            <person name="Humphray S.J."/>
            <person name="Oliver K."/>
            <person name="Hunt A.R."/>
            <person name="Plumb R.W."/>
            <person name="Loveland J.E."/>
            <person name="Howe K.L."/>
            <person name="Andrews T.D."/>
            <person name="Searle S."/>
            <person name="Hunt S.E."/>
            <person name="Scott C.E."/>
            <person name="Jones M.C."/>
            <person name="Ainscough R."/>
            <person name="Almeida J.P."/>
            <person name="Ambrose K.D."/>
            <person name="Ashwell R.I.S."/>
            <person name="Babbage A.K."/>
            <person name="Babbage S."/>
            <person name="Bagguley C.L."/>
            <person name="Bailey J."/>
            <person name="Banerjee R."/>
            <person name="Barker D.J."/>
            <person name="Barlow K.F."/>
            <person name="Bates K."/>
            <person name="Beasley H."/>
            <person name="Beasley O."/>
            <person name="Bird C.P."/>
            <person name="Bray-Allen S."/>
            <person name="Brown A.J."/>
            <person name="Brown J.Y."/>
            <person name="Burford D."/>
            <person name="Burrill W."/>
            <person name="Burton J."/>
            <person name="Carder C."/>
            <person name="Carter N.P."/>
            <person name="Chapman J.C."/>
            <person name="Chen Y."/>
            <person name="Clarke G."/>
            <person name="Clark S.Y."/>
            <person name="Clee C.M."/>
            <person name="Clegg S."/>
            <person name="Collier R.E."/>
            <person name="Corby N."/>
            <person name="Crosier M."/>
            <person name="Cummings A.T."/>
            <person name="Davies J."/>
            <person name="Dhami P."/>
            <person name="Dunn M."/>
            <person name="Dutta I."/>
            <person name="Dyer L.W."/>
            <person name="Earthrowl M.E."/>
            <person name="Faulkner L."/>
            <person name="Fleming C.J."/>
            <person name="Frankish A."/>
            <person name="Frankland J.A."/>
            <person name="French L."/>
            <person name="Fricker D.G."/>
            <person name="Garner P."/>
            <person name="Garnett J."/>
            <person name="Ghori J."/>
            <person name="Gilbert J.G.R."/>
            <person name="Glison C."/>
            <person name="Grafham D.V."/>
            <person name="Gribble S."/>
            <person name="Griffiths C."/>
            <person name="Griffiths-Jones S."/>
            <person name="Grocock R."/>
            <person name="Guy J."/>
            <person name="Hall R.E."/>
            <person name="Hammond S."/>
            <person name="Harley J.L."/>
            <person name="Harrison E.S.I."/>
            <person name="Hart E.A."/>
            <person name="Heath P.D."/>
            <person name="Henderson C.D."/>
            <person name="Hopkins B.L."/>
            <person name="Howard P.J."/>
            <person name="Howden P.J."/>
            <person name="Huckle E."/>
            <person name="Johnson C."/>
            <person name="Johnson D."/>
            <person name="Joy A.A."/>
            <person name="Kay M."/>
            <person name="Keenan S."/>
            <person name="Kershaw J.K."/>
            <person name="Kimberley A.M."/>
            <person name="King A."/>
            <person name="Knights A."/>
            <person name="Laird G.K."/>
            <person name="Langford C."/>
            <person name="Lawlor S."/>
            <person name="Leongamornlert D.A."/>
            <person name="Leversha M."/>
            <person name="Lloyd C."/>
            <person name="Lloyd D.M."/>
            <person name="Lovell J."/>
            <person name="Martin S."/>
            <person name="Mashreghi-Mohammadi M."/>
            <person name="Matthews L."/>
            <person name="McLaren S."/>
            <person name="McLay K.E."/>
            <person name="McMurray A."/>
            <person name="Milne S."/>
            <person name="Nickerson T."/>
            <person name="Nisbett J."/>
            <person name="Nordsiek G."/>
            <person name="Pearce A.V."/>
            <person name="Peck A.I."/>
            <person name="Porter K.M."/>
            <person name="Pandian R."/>
            <person name="Pelan S."/>
            <person name="Phillimore B."/>
            <person name="Povey S."/>
            <person name="Ramsey Y."/>
            <person name="Rand V."/>
            <person name="Scharfe M."/>
            <person name="Sehra H.K."/>
            <person name="Shownkeen R."/>
            <person name="Sims S.K."/>
            <person name="Skuce C.D."/>
            <person name="Smith M."/>
            <person name="Steward C.A."/>
            <person name="Swarbreck D."/>
            <person name="Sycamore N."/>
            <person name="Tester J."/>
            <person name="Thorpe A."/>
            <person name="Tracey A."/>
            <person name="Tromans A."/>
            <person name="Thomas D.W."/>
            <person name="Wall M."/>
            <person name="Wallis J.M."/>
            <person name="West A.P."/>
            <person name="Whitehead S.L."/>
            <person name="Willey D.L."/>
            <person name="Williams S.A."/>
            <person name="Wilming L."/>
            <person name="Wray P.W."/>
            <person name="Young L."/>
            <person name="Ashurst J.L."/>
            <person name="Coulson A."/>
            <person name="Blocker H."/>
            <person name="Durbin R.M."/>
            <person name="Sulston J.E."/>
            <person name="Hubbard T."/>
            <person name="Jackson M.J."/>
            <person name="Bentley D.R."/>
            <person name="Beck S."/>
            <person name="Rogers J."/>
            <person name="Dunham I."/>
        </authorList>
    </citation>
    <scope>NUCLEOTIDE SEQUENCE [LARGE SCALE GENOMIC DNA]</scope>
</reference>
<reference key="4">
    <citation type="submission" date="2005-09" db="EMBL/GenBank/DDBJ databases">
        <authorList>
            <person name="Mural R.J."/>
            <person name="Istrail S."/>
            <person name="Sutton G.G."/>
            <person name="Florea L."/>
            <person name="Halpern A.L."/>
            <person name="Mobarry C.M."/>
            <person name="Lippert R."/>
            <person name="Walenz B."/>
            <person name="Shatkay H."/>
            <person name="Dew I."/>
            <person name="Miller J.R."/>
            <person name="Flanigan M.J."/>
            <person name="Edwards N.J."/>
            <person name="Bolanos R."/>
            <person name="Fasulo D."/>
            <person name="Halldorsson B.V."/>
            <person name="Hannenhalli S."/>
            <person name="Turner R."/>
            <person name="Yooseph S."/>
            <person name="Lu F."/>
            <person name="Nusskern D.R."/>
            <person name="Shue B.C."/>
            <person name="Zheng X.H."/>
            <person name="Zhong F."/>
            <person name="Delcher A.L."/>
            <person name="Huson D.H."/>
            <person name="Kravitz S.A."/>
            <person name="Mouchard L."/>
            <person name="Reinert K."/>
            <person name="Remington K.A."/>
            <person name="Clark A.G."/>
            <person name="Waterman M.S."/>
            <person name="Eichler E.E."/>
            <person name="Adams M.D."/>
            <person name="Hunkapiller M.W."/>
            <person name="Myers E.W."/>
            <person name="Venter J.C."/>
        </authorList>
    </citation>
    <scope>NUCLEOTIDE SEQUENCE [LARGE SCALE GENOMIC DNA]</scope>
</reference>
<reference key="5">
    <citation type="journal article" date="2004" name="Genome Res.">
        <title>The status, quality, and expansion of the NIH full-length cDNA project: the Mammalian Gene Collection (MGC).</title>
        <authorList>
            <consortium name="The MGC Project Team"/>
        </authorList>
    </citation>
    <scope>NUCLEOTIDE SEQUENCE [LARGE SCALE MRNA]</scope>
    <scope>VARIANT MET-33</scope>
    <source>
        <tissue>Colon</tissue>
    </source>
</reference>
<reference key="6">
    <citation type="journal article" date="2004" name="Protein Sci.">
        <title>Signal peptide prediction based on analysis of experimentally verified cleavage sites.</title>
        <authorList>
            <person name="Zhang Z."/>
            <person name="Henzel W.J."/>
        </authorList>
    </citation>
    <scope>PROTEIN SEQUENCE OF 38-52</scope>
</reference>
<reference key="7">
    <citation type="journal article" date="1992" name="Virology">
        <title>A novel quasi-viral agent, MaTu, is a two-component system.</title>
        <authorList>
            <person name="Pastorekova S."/>
            <person name="Zavadova Z."/>
            <person name="Kostal M."/>
            <person name="Babusikova O."/>
            <person name="Zavada J."/>
        </authorList>
    </citation>
    <scope>CHARACTERIZATION</scope>
</reference>
<reference key="8">
    <citation type="journal article" date="1993" name="Int. J. Cancer">
        <title>Expression of MaTu-MN protein in human tumor cultures and in clinical specimens.</title>
        <authorList>
            <person name="Zavada J."/>
            <person name="Zavadova Z."/>
            <person name="Pastorekova S."/>
            <person name="Ciampor F."/>
            <person name="Pastorek J."/>
            <person name="Zelnik V."/>
        </authorList>
    </citation>
    <scope>SUBCELLULAR LOCATION</scope>
</reference>
<reference key="9">
    <citation type="journal article" date="2005" name="Eur. J. Cancer">
        <title>The role of carbonic anhydrase IX overexpression in kidney cancer.</title>
        <authorList>
            <person name="Dorai T."/>
            <person name="Sawczuk I.S."/>
            <person name="Pastorek J."/>
            <person name="Wiernik P.H."/>
            <person name="Dutcher J.P."/>
        </authorList>
    </citation>
    <scope>PHOSPHORYLATION AT TYR-449</scope>
</reference>
<reference key="10">
    <citation type="journal article" date="2007" name="Angew. Chem. Int. Ed. Engl.">
        <title>Saccharin inhibits carbonic anhydrases: possible explanation for its unpleasant metallic aftertaste.</title>
        <authorList>
            <person name="Koehler K."/>
            <person name="Hillebrecht A."/>
            <person name="Schulze Wischeler J."/>
            <person name="Innocenti A."/>
            <person name="Heine A."/>
            <person name="Supuran C.T."/>
            <person name="Klebe G."/>
        </authorList>
    </citation>
    <scope>ACTIVITY REGULATION</scope>
    <scope>FUNCTION</scope>
    <scope>CATALYTIC ACTIVITY</scope>
</reference>
<reference key="11">
    <citation type="journal article" date="2007" name="Bioorg. Med. Chem. Lett.">
        <title>Phosph(on)ate as a zinc-binding group in metalloenzyme inhibitors: X-ray crystal structure of the antiviral drug foscarnet complexed to human carbonic anhydrase I.</title>
        <authorList>
            <person name="Temperini C."/>
            <person name="Innocenti A."/>
            <person name="Guerri A."/>
            <person name="Scozzafava A."/>
            <person name="Rusconi S."/>
            <person name="Supuran C.T."/>
        </authorList>
    </citation>
    <scope>ACTIVITY REGULATION</scope>
    <scope>FUNCTION</scope>
    <scope>CATALYTIC ACTIVITY</scope>
</reference>
<reference key="12">
    <citation type="journal article" date="2008" name="J. Biol. Chem.">
        <title>Biochemical characterization of CA IX, one of the most active carbonic anhydrase isozymes.</title>
        <authorList>
            <person name="Hilvo M."/>
            <person name="Baranauskiene L."/>
            <person name="Salzano A.M."/>
            <person name="Scaloni A."/>
            <person name="Matulis D."/>
            <person name="Innocenti A."/>
            <person name="Scozzafava A."/>
            <person name="Monti S.M."/>
            <person name="Di Fiore A."/>
            <person name="De Simone G."/>
            <person name="Lindfors M."/>
            <person name="Janis J."/>
            <person name="Valjakka J."/>
            <person name="Pastorekova S."/>
            <person name="Pastorek J."/>
            <person name="Kulomaa M.S."/>
            <person name="Nordlund H.R."/>
            <person name="Supuran C.T."/>
            <person name="Parkkila S."/>
        </authorList>
    </citation>
    <scope>FUNCTION</scope>
    <scope>SUBUNIT</scope>
    <scope>INDUCTION</scope>
    <scope>GLYCOSYLATION AT THR-115 AND ASN-346</scope>
    <scope>DISULFIDE BONDS</scope>
    <scope>CATALYTIC ACTIVITY</scope>
    <scope>BIOPHYSICOCHEMICAL PROPERTIES</scope>
    <scope>COFACTOR</scope>
    <scope>ACTIVITY REGULATION</scope>
</reference>
<reference key="13">
    <citation type="journal article" date="2008" name="Proc. Natl. Acad. Sci. U.S.A.">
        <title>A quantitative atlas of mitotic phosphorylation.</title>
        <authorList>
            <person name="Dephoure N."/>
            <person name="Zhou C."/>
            <person name="Villen J."/>
            <person name="Beausoleil S.A."/>
            <person name="Bakalarski C.E."/>
            <person name="Elledge S.J."/>
            <person name="Gygi S.P."/>
        </authorList>
    </citation>
    <scope>IDENTIFICATION BY MASS SPECTROMETRY [LARGE SCALE ANALYSIS]</scope>
    <source>
        <tissue>Cervix carcinoma</tissue>
    </source>
</reference>
<reference key="14">
    <citation type="journal article" date="2009" name="Bioorg. Med. Chem. Lett.">
        <title>A thiabendazole sulfonamide shows potent inhibitory activity against mammalian and nematode alpha-carbonic anhydrases.</title>
        <authorList>
            <person name="Crocetti L."/>
            <person name="Maresca A."/>
            <person name="Temperini C."/>
            <person name="Hall R.A."/>
            <person name="Scozzafava A."/>
            <person name="Muehlschlegel F.A."/>
            <person name="Supuran C.T."/>
        </authorList>
    </citation>
    <scope>ACTIVITY REGULATION</scope>
    <scope>FUNCTION</scope>
    <scope>CATALYTIC ACTIVITY</scope>
</reference>
<reference key="15">
    <citation type="journal article" date="2009" name="J. Am. Chem. Soc.">
        <title>Non-zinc mediated inhibition of carbonic anhydrases: coumarins are a new class of suicide inhibitors.</title>
        <authorList>
            <person name="Maresca A."/>
            <person name="Temperini C."/>
            <person name="Vu H."/>
            <person name="Pham N.B."/>
            <person name="Poulsen S.-A."/>
            <person name="Scozzafava A."/>
            <person name="Quinn R.J."/>
            <person name="Supuran C.T."/>
        </authorList>
    </citation>
    <scope>ACTIVITY REGULATION</scope>
    <scope>FUNCTION</scope>
    <scope>CATALYTIC ACTIVITY</scope>
</reference>
<reference key="16">
    <citation type="journal article" date="2008" name="Proteins">
        <title>Stabilization of antibody structure upon association to a human carbonic anhydrase IX epitope studied by X-ray crystallography, microcalorimetry, and molecular dynamics simulations.</title>
        <authorList>
            <person name="Kral V."/>
            <person name="Mader P."/>
            <person name="Collard R."/>
            <person name="Fabry M."/>
            <person name="Horejsi M."/>
            <person name="Rezacova P."/>
            <person name="Kozisek M."/>
            <person name="Zavada J."/>
            <person name="Sedlacek J."/>
            <person name="Rulisek L."/>
            <person name="Brynda J."/>
        </authorList>
    </citation>
    <scope>X-RAY CRYSTALLOGRAPHY (2.01 ANGSTROMS) OF 83-91 IN COMPLEX WITH SPECIFIC ANTIBODIES</scope>
</reference>
<reference key="17">
    <citation type="journal article" date="2009" name="Proc. Natl. Acad. Sci. U.S.A.">
        <title>Crystal structure of the catalytic domain of the tumor-associated human carbonic anhydrase IX.</title>
        <authorList>
            <person name="Alterio V."/>
            <person name="Hilvo M."/>
            <person name="Di Fiore A."/>
            <person name="Supuran C.T."/>
            <person name="Pan P."/>
            <person name="Parkkila S."/>
            <person name="Scaloni A."/>
            <person name="Pastorek J."/>
            <person name="Pastorekova S."/>
            <person name="Pedone C."/>
            <person name="Scozzafava A."/>
            <person name="Monti S.M."/>
            <person name="De Simone G."/>
        </authorList>
    </citation>
    <scope>X-RAY CRYSTALLOGRAPHY (2.20 ANGSTROMS) OF 137-391 IN COMPLEX WITH ZINC ION AND THE INHIBITOR ACETAZOLAMIDE</scope>
    <scope>GLYCOSYLATION AT ASN-346</scope>
    <scope>DISULFIDE BOND</scope>
    <scope>SUBUNIT</scope>
    <scope>BIOPHYSICOCHEMICAL PROPERTIES</scope>
    <scope>FUNCTION</scope>
    <scope>CATALYTIC ACTIVITY</scope>
    <scope>COFACTOR</scope>
    <scope>ZINC-BINDING SITES</scope>
    <scope>ACTIVITY REGULATION</scope>
</reference>
<name>CAH9_HUMAN</name>
<comment type="function">
    <text evidence="8 9 10 11 12 13">Catalyzes the interconversion between carbon dioxide and water and the dissociated ions of carbonic acid (i.e. bicarbonate and hydrogen ions).</text>
</comment>
<comment type="catalytic activity">
    <reaction evidence="8 9 10 11 12 13">
        <text>hydrogencarbonate + H(+) = CO2 + H2O</text>
        <dbReference type="Rhea" id="RHEA:10748"/>
        <dbReference type="ChEBI" id="CHEBI:15377"/>
        <dbReference type="ChEBI" id="CHEBI:15378"/>
        <dbReference type="ChEBI" id="CHEBI:16526"/>
        <dbReference type="ChEBI" id="CHEBI:17544"/>
        <dbReference type="EC" id="4.2.1.1"/>
    </reaction>
    <physiologicalReaction direction="left-to-right" evidence="17">
        <dbReference type="Rhea" id="RHEA:10749"/>
    </physiologicalReaction>
    <physiologicalReaction direction="right-to-left" evidence="17">
        <dbReference type="Rhea" id="RHEA:10750"/>
    </physiologicalReaction>
</comment>
<comment type="cofactor">
    <cofactor evidence="10 13">
        <name>Zn(2+)</name>
        <dbReference type="ChEBI" id="CHEBI:29105"/>
    </cofactor>
</comment>
<comment type="activity regulation">
    <text evidence="8 9 10 11 12 13">Inhibited by coumarins, saccharin, sulfonamide derivatives such as acetazolamide (AZA) and Foscarnet (phosphonoformate trisodium salt).</text>
</comment>
<comment type="biophysicochemical properties">
    <kinetics>
        <KM evidence="10">7.5 mM for CO(2)</KM>
        <KM evidence="10">7.3 mM for CO(2) (in the presence of ZnCl2)</KM>
    </kinetics>
    <phDependence>
        <text evidence="13">Optimum pH is 6.5.</text>
    </phDependence>
</comment>
<comment type="subunit">
    <text evidence="10 13">Forms oligomers linked by disulfide bonds.</text>
</comment>
<comment type="interaction">
    <interactant intactId="EBI-12259996">
        <id>Q16790</id>
    </interactant>
    <interactant intactId="EBI-3959636">
        <id>P21291</id>
        <label>CSRP1</label>
    </interactant>
    <organismsDiffer>false</organismsDiffer>
    <experiments>3</experiments>
</comment>
<comment type="interaction">
    <interactant intactId="EBI-12259996">
        <id>Q16790</id>
    </interactant>
    <interactant intactId="EBI-374781">
        <id>O76003</id>
        <label>GLRX3</label>
    </interactant>
    <organismsDiffer>false</organismsDiffer>
    <experiments>9</experiments>
</comment>
<comment type="subcellular location">
    <subcellularLocation>
        <location evidence="15">Nucleus</location>
    </subcellularLocation>
    <subcellularLocation>
        <location evidence="15">Nucleus</location>
        <location evidence="15">Nucleolus</location>
    </subcellularLocation>
    <subcellularLocation>
        <location evidence="15">Cell membrane</location>
        <topology evidence="15">Single-pass type I membrane protein</topology>
    </subcellularLocation>
    <subcellularLocation>
        <location evidence="15">Cell projection</location>
        <location evidence="15">Microvillus membrane</location>
        <topology evidence="15">Single-pass type I membrane protein</topology>
    </subcellularLocation>
    <text>Found on the surface microvilli and in the nucleus, particularly in nucleolus.</text>
</comment>
<comment type="tissue specificity">
    <text>Expressed primarily in carcinoma cells lines. Expression is restricted to very few normal tissues and the most abundant expression is found in the epithelial cells of gastric mucosa.</text>
</comment>
<comment type="induction">
    <text evidence="10">By hypoxia.</text>
</comment>
<comment type="PTM">
    <text evidence="13">Asn-346 bears high-mannose type glycan structures.</text>
</comment>
<comment type="similarity">
    <text evidence="16">Belongs to the alpha-carbonic anhydrase family.</text>
</comment>